<reference key="1">
    <citation type="journal article" date="2010" name="Genome Biol. Evol.">
        <title>Continuing evolution of Burkholderia mallei through genome reduction and large-scale rearrangements.</title>
        <authorList>
            <person name="Losada L."/>
            <person name="Ronning C.M."/>
            <person name="DeShazer D."/>
            <person name="Woods D."/>
            <person name="Fedorova N."/>
            <person name="Kim H.S."/>
            <person name="Shabalina S.A."/>
            <person name="Pearson T.R."/>
            <person name="Brinkac L."/>
            <person name="Tan P."/>
            <person name="Nandi T."/>
            <person name="Crabtree J."/>
            <person name="Badger J."/>
            <person name="Beckstrom-Sternberg S."/>
            <person name="Saqib M."/>
            <person name="Schutzer S.E."/>
            <person name="Keim P."/>
            <person name="Nierman W.C."/>
        </authorList>
    </citation>
    <scope>NUCLEOTIDE SEQUENCE [LARGE SCALE GENOMIC DNA]</scope>
    <source>
        <strain>668</strain>
    </source>
</reference>
<name>SYM_BURP6</name>
<comment type="function">
    <text evidence="1">Is required not only for elongation of protein synthesis but also for the initiation of all mRNA translation through initiator tRNA(fMet) aminoacylation.</text>
</comment>
<comment type="catalytic activity">
    <reaction evidence="1">
        <text>tRNA(Met) + L-methionine + ATP = L-methionyl-tRNA(Met) + AMP + diphosphate</text>
        <dbReference type="Rhea" id="RHEA:13481"/>
        <dbReference type="Rhea" id="RHEA-COMP:9667"/>
        <dbReference type="Rhea" id="RHEA-COMP:9698"/>
        <dbReference type="ChEBI" id="CHEBI:30616"/>
        <dbReference type="ChEBI" id="CHEBI:33019"/>
        <dbReference type="ChEBI" id="CHEBI:57844"/>
        <dbReference type="ChEBI" id="CHEBI:78442"/>
        <dbReference type="ChEBI" id="CHEBI:78530"/>
        <dbReference type="ChEBI" id="CHEBI:456215"/>
        <dbReference type="EC" id="6.1.1.10"/>
    </reaction>
</comment>
<comment type="cofactor">
    <cofactor evidence="1">
        <name>Zn(2+)</name>
        <dbReference type="ChEBI" id="CHEBI:29105"/>
    </cofactor>
    <text evidence="1">Binds 1 zinc ion per subunit.</text>
</comment>
<comment type="subunit">
    <text evidence="1">Homodimer.</text>
</comment>
<comment type="subcellular location">
    <subcellularLocation>
        <location evidence="1">Cytoplasm</location>
    </subcellularLocation>
</comment>
<comment type="similarity">
    <text evidence="1">Belongs to the class-I aminoacyl-tRNA synthetase family. MetG type 1 subfamily.</text>
</comment>
<comment type="sequence caution" evidence="2">
    <conflict type="erroneous initiation">
        <sequence resource="EMBL-CDS" id="ABN83818"/>
    </conflict>
</comment>
<dbReference type="EC" id="6.1.1.10" evidence="1"/>
<dbReference type="EMBL" id="CP000570">
    <property type="protein sequence ID" value="ABN83818.1"/>
    <property type="status" value="ALT_INIT"/>
    <property type="molecule type" value="Genomic_DNA"/>
</dbReference>
<dbReference type="RefSeq" id="WP_038718051.1">
    <property type="nucleotide sequence ID" value="NC_009074.1"/>
</dbReference>
<dbReference type="SMR" id="A3N6Y1"/>
<dbReference type="GeneID" id="93059498"/>
<dbReference type="KEGG" id="bpd:BURPS668_1052"/>
<dbReference type="HOGENOM" id="CLU_009710_7_0_4"/>
<dbReference type="GO" id="GO:0005829">
    <property type="term" value="C:cytosol"/>
    <property type="evidence" value="ECO:0007669"/>
    <property type="project" value="TreeGrafter"/>
</dbReference>
<dbReference type="GO" id="GO:0005524">
    <property type="term" value="F:ATP binding"/>
    <property type="evidence" value="ECO:0007669"/>
    <property type="project" value="UniProtKB-UniRule"/>
</dbReference>
<dbReference type="GO" id="GO:0046872">
    <property type="term" value="F:metal ion binding"/>
    <property type="evidence" value="ECO:0007669"/>
    <property type="project" value="UniProtKB-KW"/>
</dbReference>
<dbReference type="GO" id="GO:0004825">
    <property type="term" value="F:methionine-tRNA ligase activity"/>
    <property type="evidence" value="ECO:0007669"/>
    <property type="project" value="UniProtKB-UniRule"/>
</dbReference>
<dbReference type="GO" id="GO:0000049">
    <property type="term" value="F:tRNA binding"/>
    <property type="evidence" value="ECO:0007669"/>
    <property type="project" value="UniProtKB-KW"/>
</dbReference>
<dbReference type="GO" id="GO:0006431">
    <property type="term" value="P:methionyl-tRNA aminoacylation"/>
    <property type="evidence" value="ECO:0007669"/>
    <property type="project" value="UniProtKB-UniRule"/>
</dbReference>
<dbReference type="CDD" id="cd07957">
    <property type="entry name" value="Anticodon_Ia_Met"/>
    <property type="match status" value="1"/>
</dbReference>
<dbReference type="CDD" id="cd00814">
    <property type="entry name" value="MetRS_core"/>
    <property type="match status" value="1"/>
</dbReference>
<dbReference type="CDD" id="cd02800">
    <property type="entry name" value="tRNA_bind_EcMetRS_like"/>
    <property type="match status" value="1"/>
</dbReference>
<dbReference type="FunFam" id="2.20.28.20:FF:000001">
    <property type="entry name" value="Methionine--tRNA ligase"/>
    <property type="match status" value="1"/>
</dbReference>
<dbReference type="FunFam" id="2.40.50.140:FF:000042">
    <property type="entry name" value="Methionine--tRNA ligase"/>
    <property type="match status" value="1"/>
</dbReference>
<dbReference type="Gene3D" id="3.40.50.620">
    <property type="entry name" value="HUPs"/>
    <property type="match status" value="1"/>
</dbReference>
<dbReference type="Gene3D" id="1.10.730.10">
    <property type="entry name" value="Isoleucyl-tRNA Synthetase, Domain 1"/>
    <property type="match status" value="1"/>
</dbReference>
<dbReference type="Gene3D" id="2.20.28.20">
    <property type="entry name" value="Methionyl-tRNA synthetase, Zn-domain"/>
    <property type="match status" value="1"/>
</dbReference>
<dbReference type="Gene3D" id="2.40.50.140">
    <property type="entry name" value="Nucleic acid-binding proteins"/>
    <property type="match status" value="1"/>
</dbReference>
<dbReference type="HAMAP" id="MF_00098">
    <property type="entry name" value="Met_tRNA_synth_type1"/>
    <property type="match status" value="1"/>
</dbReference>
<dbReference type="InterPro" id="IPR001412">
    <property type="entry name" value="aa-tRNA-synth_I_CS"/>
</dbReference>
<dbReference type="InterPro" id="IPR041872">
    <property type="entry name" value="Anticodon_Met"/>
</dbReference>
<dbReference type="InterPro" id="IPR004495">
    <property type="entry name" value="Met-tRNA-synth_bsu_C"/>
</dbReference>
<dbReference type="InterPro" id="IPR023458">
    <property type="entry name" value="Met-tRNA_ligase_1"/>
</dbReference>
<dbReference type="InterPro" id="IPR014758">
    <property type="entry name" value="Met-tRNA_synth"/>
</dbReference>
<dbReference type="InterPro" id="IPR015413">
    <property type="entry name" value="Methionyl/Leucyl_tRNA_Synth"/>
</dbReference>
<dbReference type="InterPro" id="IPR033911">
    <property type="entry name" value="MetRS_core"/>
</dbReference>
<dbReference type="InterPro" id="IPR029038">
    <property type="entry name" value="MetRS_Zn"/>
</dbReference>
<dbReference type="InterPro" id="IPR012340">
    <property type="entry name" value="NA-bd_OB-fold"/>
</dbReference>
<dbReference type="InterPro" id="IPR014729">
    <property type="entry name" value="Rossmann-like_a/b/a_fold"/>
</dbReference>
<dbReference type="InterPro" id="IPR002547">
    <property type="entry name" value="tRNA-bd_dom"/>
</dbReference>
<dbReference type="InterPro" id="IPR009080">
    <property type="entry name" value="tRNAsynth_Ia_anticodon-bd"/>
</dbReference>
<dbReference type="NCBIfam" id="TIGR00398">
    <property type="entry name" value="metG"/>
    <property type="match status" value="1"/>
</dbReference>
<dbReference type="NCBIfam" id="TIGR00399">
    <property type="entry name" value="metG_C_term"/>
    <property type="match status" value="1"/>
</dbReference>
<dbReference type="NCBIfam" id="NF001100">
    <property type="entry name" value="PRK00133.1"/>
    <property type="match status" value="1"/>
</dbReference>
<dbReference type="PANTHER" id="PTHR45765">
    <property type="entry name" value="METHIONINE--TRNA LIGASE"/>
    <property type="match status" value="1"/>
</dbReference>
<dbReference type="PANTHER" id="PTHR45765:SF1">
    <property type="entry name" value="METHIONINE--TRNA LIGASE, CYTOPLASMIC"/>
    <property type="match status" value="1"/>
</dbReference>
<dbReference type="Pfam" id="PF09334">
    <property type="entry name" value="tRNA-synt_1g"/>
    <property type="match status" value="1"/>
</dbReference>
<dbReference type="Pfam" id="PF01588">
    <property type="entry name" value="tRNA_bind"/>
    <property type="match status" value="1"/>
</dbReference>
<dbReference type="PRINTS" id="PR01041">
    <property type="entry name" value="TRNASYNTHMET"/>
</dbReference>
<dbReference type="SUPFAM" id="SSF47323">
    <property type="entry name" value="Anticodon-binding domain of a subclass of class I aminoacyl-tRNA synthetases"/>
    <property type="match status" value="1"/>
</dbReference>
<dbReference type="SUPFAM" id="SSF57770">
    <property type="entry name" value="Methionyl-tRNA synthetase (MetRS), Zn-domain"/>
    <property type="match status" value="1"/>
</dbReference>
<dbReference type="SUPFAM" id="SSF50249">
    <property type="entry name" value="Nucleic acid-binding proteins"/>
    <property type="match status" value="1"/>
</dbReference>
<dbReference type="SUPFAM" id="SSF52374">
    <property type="entry name" value="Nucleotidylyl transferase"/>
    <property type="match status" value="1"/>
</dbReference>
<dbReference type="PROSITE" id="PS00178">
    <property type="entry name" value="AA_TRNA_LIGASE_I"/>
    <property type="match status" value="1"/>
</dbReference>
<dbReference type="PROSITE" id="PS50886">
    <property type="entry name" value="TRBD"/>
    <property type="match status" value="1"/>
</dbReference>
<accession>A3N6Y1</accession>
<proteinExistence type="inferred from homology"/>
<organism>
    <name type="scientific">Burkholderia pseudomallei (strain 668)</name>
    <dbReference type="NCBI Taxonomy" id="320373"/>
    <lineage>
        <taxon>Bacteria</taxon>
        <taxon>Pseudomonadati</taxon>
        <taxon>Pseudomonadota</taxon>
        <taxon>Betaproteobacteria</taxon>
        <taxon>Burkholderiales</taxon>
        <taxon>Burkholderiaceae</taxon>
        <taxon>Burkholderia</taxon>
        <taxon>pseudomallei group</taxon>
    </lineage>
</organism>
<feature type="chain" id="PRO_0000331795" description="Methionine--tRNA ligase">
    <location>
        <begin position="1"/>
        <end position="725"/>
    </location>
</feature>
<feature type="domain" description="tRNA-binding" evidence="1">
    <location>
        <begin position="619"/>
        <end position="725"/>
    </location>
</feature>
<feature type="short sequence motif" description="'HIGH' region">
    <location>
        <begin position="27"/>
        <end position="37"/>
    </location>
</feature>
<feature type="short sequence motif" description="'KMSKS' region">
    <location>
        <begin position="348"/>
        <end position="352"/>
    </location>
</feature>
<feature type="binding site" evidence="1">
    <location>
        <position position="158"/>
    </location>
    <ligand>
        <name>Zn(2+)</name>
        <dbReference type="ChEBI" id="CHEBI:29105"/>
    </ligand>
</feature>
<feature type="binding site" evidence="1">
    <location>
        <position position="161"/>
    </location>
    <ligand>
        <name>Zn(2+)</name>
        <dbReference type="ChEBI" id="CHEBI:29105"/>
    </ligand>
</feature>
<feature type="binding site" evidence="1">
    <location>
        <position position="171"/>
    </location>
    <ligand>
        <name>Zn(2+)</name>
        <dbReference type="ChEBI" id="CHEBI:29105"/>
    </ligand>
</feature>
<feature type="binding site" evidence="1">
    <location>
        <position position="174"/>
    </location>
    <ligand>
        <name>Zn(2+)</name>
        <dbReference type="ChEBI" id="CHEBI:29105"/>
    </ligand>
</feature>
<feature type="binding site" evidence="1">
    <location>
        <position position="351"/>
    </location>
    <ligand>
        <name>ATP</name>
        <dbReference type="ChEBI" id="CHEBI:30616"/>
    </ligand>
</feature>
<sequence length="725" mass="79915">MSASDLTSVQAGAPQGRRQILVTSALPYANGQIHIGHLVEYIQTDIWVRTMRMHGHEIYYIGADDTHGTPVMLRAEQEGVSPKQLIERVWREHKRDFDSFGVSFDNFYTTDSDENRVLSETIYLALKEAGFIAEREIEQAYDPVRQMFLPDRFIKGECPKCHAKDQYGDSCEVCGTTYQPTDLIHPYSVVSGAAPVRKTSTHYFFRLSDPRCEAFLREWVSGLAQPEATNKMREWLGEAGEAKLADWDISRDAPYFGFEIPGAPGKYFYVWLDAPVGYYASFKNLCERRGLDFDAWIRKDSTTEQYHFIGKDILYFHTLFWPAMLEFSGHRTPTNVFAHGFLTVDGAKMSKSRGTFITAQSYIDTGLNPEWLRYYFAAKLNATMEDIDLNLEDFQARVNSDLVGKYVNIASRAAGFLLKRFDGRVQASAMNHPLLATLRGAIPQIAAHYEAREYGRALRQTMELADAVNGYVDSAKPWELAKDPANAVALHETCSVSLEAFRLLSLALKPVLPRVAQGVEAFLGIAPLTWADAGMPLSPEQPVRAYQHLMTRVDPKQIDALLAANRGSLQGTAAAAEAGAANGNGAGSKNGKGAKAAAQPAASAANADDGASPIISIDDFAKIDLRIAKIVACQAVEGSDKLLQLTLDVGEERTRNVFSGIKSAYRPEQLVGKLTVMVANLAPRKMKFGLSEGMVLAASAADEKAEPGLYILEPHSGAKPGMRVK</sequence>
<gene>
    <name evidence="1" type="primary">metG</name>
    <name type="ordered locus">BURPS668_1052</name>
</gene>
<keyword id="KW-0030">Aminoacyl-tRNA synthetase</keyword>
<keyword id="KW-0067">ATP-binding</keyword>
<keyword id="KW-0963">Cytoplasm</keyword>
<keyword id="KW-0436">Ligase</keyword>
<keyword id="KW-0479">Metal-binding</keyword>
<keyword id="KW-0547">Nucleotide-binding</keyword>
<keyword id="KW-0648">Protein biosynthesis</keyword>
<keyword id="KW-0694">RNA-binding</keyword>
<keyword id="KW-0820">tRNA-binding</keyword>
<keyword id="KW-0862">Zinc</keyword>
<evidence type="ECO:0000255" key="1">
    <source>
        <dbReference type="HAMAP-Rule" id="MF_00098"/>
    </source>
</evidence>
<evidence type="ECO:0000305" key="2"/>
<protein>
    <recommendedName>
        <fullName evidence="1">Methionine--tRNA ligase</fullName>
        <ecNumber evidence="1">6.1.1.10</ecNumber>
    </recommendedName>
    <alternativeName>
        <fullName evidence="1">Methionyl-tRNA synthetase</fullName>
        <shortName evidence="1">MetRS</shortName>
    </alternativeName>
</protein>